<protein>
    <recommendedName>
        <fullName evidence="1">N-succinylarginine dihydrolase</fullName>
        <ecNumber evidence="1">3.5.3.23</ecNumber>
    </recommendedName>
</protein>
<feature type="chain" id="PRO_1000065732" description="N-succinylarginine dihydrolase">
    <location>
        <begin position="1"/>
        <end position="448"/>
    </location>
</feature>
<feature type="active site" evidence="1">
    <location>
        <position position="174"/>
    </location>
</feature>
<feature type="active site" evidence="1">
    <location>
        <position position="250"/>
    </location>
</feature>
<feature type="active site" description="Nucleophile" evidence="1">
    <location>
        <position position="371"/>
    </location>
</feature>
<feature type="binding site" evidence="1">
    <location>
        <begin position="19"/>
        <end position="28"/>
    </location>
    <ligand>
        <name>substrate</name>
    </ligand>
</feature>
<feature type="binding site" evidence="1">
    <location>
        <position position="110"/>
    </location>
    <ligand>
        <name>substrate</name>
    </ligand>
</feature>
<feature type="binding site" evidence="1">
    <location>
        <begin position="137"/>
        <end position="138"/>
    </location>
    <ligand>
        <name>substrate</name>
    </ligand>
</feature>
<feature type="binding site" evidence="1">
    <location>
        <position position="214"/>
    </location>
    <ligand>
        <name>substrate</name>
    </ligand>
</feature>
<feature type="binding site" evidence="1">
    <location>
        <position position="252"/>
    </location>
    <ligand>
        <name>substrate</name>
    </ligand>
</feature>
<feature type="binding site" evidence="1">
    <location>
        <position position="365"/>
    </location>
    <ligand>
        <name>substrate</name>
    </ligand>
</feature>
<organism>
    <name type="scientific">Ectopseudomonas mendocina (strain ymp)</name>
    <name type="common">Pseudomonas mendocina</name>
    <dbReference type="NCBI Taxonomy" id="399739"/>
    <lineage>
        <taxon>Bacteria</taxon>
        <taxon>Pseudomonadati</taxon>
        <taxon>Pseudomonadota</taxon>
        <taxon>Gammaproteobacteria</taxon>
        <taxon>Pseudomonadales</taxon>
        <taxon>Pseudomonadaceae</taxon>
        <taxon>Ectopseudomonas</taxon>
    </lineage>
</organism>
<evidence type="ECO:0000255" key="1">
    <source>
        <dbReference type="HAMAP-Rule" id="MF_01172"/>
    </source>
</evidence>
<name>ASTB_ECTM1</name>
<comment type="function">
    <text evidence="1">Catalyzes the hydrolysis of N(2)-succinylarginine into N(2)-succinylornithine, ammonia and CO(2).</text>
</comment>
<comment type="catalytic activity">
    <reaction evidence="1">
        <text>N(2)-succinyl-L-arginine + 2 H2O + 2 H(+) = N(2)-succinyl-L-ornithine + 2 NH4(+) + CO2</text>
        <dbReference type="Rhea" id="RHEA:19533"/>
        <dbReference type="ChEBI" id="CHEBI:15377"/>
        <dbReference type="ChEBI" id="CHEBI:15378"/>
        <dbReference type="ChEBI" id="CHEBI:16526"/>
        <dbReference type="ChEBI" id="CHEBI:28938"/>
        <dbReference type="ChEBI" id="CHEBI:58241"/>
        <dbReference type="ChEBI" id="CHEBI:58514"/>
        <dbReference type="EC" id="3.5.3.23"/>
    </reaction>
</comment>
<comment type="pathway">
    <text evidence="1">Amino-acid degradation; L-arginine degradation via AST pathway; L-glutamate and succinate from L-arginine: step 2/5.</text>
</comment>
<comment type="subunit">
    <text evidence="1">Homodimer.</text>
</comment>
<comment type="similarity">
    <text evidence="1">Belongs to the succinylarginine dihydrolase family.</text>
</comment>
<sequence>MTAYEMNFDGLVGPTHNYGGLSYGNVASQSNSQAISNPKEAAKQGLAKMKALMDMGFKQGVLAPQERPDVAALRRLGFTGSDPEVIARAAREAMPLLVASCSASSMWTANACTVSPSADTADARVHFTAANLNCKFHRSIEHPTTSRVLQAMFASQEHFAHHPALPAVSQFGDEGAANHTRFCKSYGEPGVEFFVYGRSAFDSRYPAPARYPARQTLEASQAVARLHGLSEEGVVYAQQNPAVIDQGVFHNDVIAVGNGEVLFYHQDAFLDTDKVLGELGSKLAGRGGNFQAVCVPNSAVSVEDAVKSYLFNSQLLTRADGSMLLVVPEECRNNASVWRYLEQLTAGNGPIREVRVFDLKQSMQNGGGPACLRLRVALKEQELAAVNPGVVMSLELHDRLVAWVDKHYRDRLSEADLADPQLLIECRTALDELTQILKLGSVYPFQMT</sequence>
<keyword id="KW-0056">Arginine metabolism</keyword>
<keyword id="KW-0378">Hydrolase</keyword>
<accession>A4XWE6</accession>
<proteinExistence type="inferred from homology"/>
<reference key="1">
    <citation type="submission" date="2007-04" db="EMBL/GenBank/DDBJ databases">
        <title>Complete sequence of Pseudomonas mendocina ymp.</title>
        <authorList>
            <consortium name="US DOE Joint Genome Institute"/>
            <person name="Copeland A."/>
            <person name="Lucas S."/>
            <person name="Lapidus A."/>
            <person name="Barry K."/>
            <person name="Glavina del Rio T."/>
            <person name="Dalin E."/>
            <person name="Tice H."/>
            <person name="Pitluck S."/>
            <person name="Kiss H."/>
            <person name="Brettin T."/>
            <person name="Detter J.C."/>
            <person name="Bruce D."/>
            <person name="Han C."/>
            <person name="Schmutz J."/>
            <person name="Larimer F."/>
            <person name="Land M."/>
            <person name="Hauser L."/>
            <person name="Kyrpides N."/>
            <person name="Mikhailova N."/>
            <person name="Hersman L."/>
            <person name="Dubois J."/>
            <person name="Maurice P."/>
            <person name="Richardson P."/>
        </authorList>
    </citation>
    <scope>NUCLEOTIDE SEQUENCE [LARGE SCALE GENOMIC DNA]</scope>
    <source>
        <strain>ymp</strain>
    </source>
</reference>
<gene>
    <name evidence="1" type="primary">astB</name>
    <name type="ordered locus">Pmen_2907</name>
</gene>
<dbReference type="EC" id="3.5.3.23" evidence="1"/>
<dbReference type="EMBL" id="CP000680">
    <property type="protein sequence ID" value="ABP85662.1"/>
    <property type="molecule type" value="Genomic_DNA"/>
</dbReference>
<dbReference type="SMR" id="A4XWE6"/>
<dbReference type="STRING" id="399739.Pmen_2907"/>
<dbReference type="KEGG" id="pmy:Pmen_2907"/>
<dbReference type="PATRIC" id="fig|399739.8.peg.2946"/>
<dbReference type="eggNOG" id="COG3724">
    <property type="taxonomic scope" value="Bacteria"/>
</dbReference>
<dbReference type="HOGENOM" id="CLU_053835_0_0_6"/>
<dbReference type="OrthoDB" id="248552at2"/>
<dbReference type="UniPathway" id="UPA00185">
    <property type="reaction ID" value="UER00280"/>
</dbReference>
<dbReference type="GO" id="GO:0009015">
    <property type="term" value="F:N-succinylarginine dihydrolase activity"/>
    <property type="evidence" value="ECO:0007669"/>
    <property type="project" value="UniProtKB-UniRule"/>
</dbReference>
<dbReference type="GO" id="GO:0019544">
    <property type="term" value="P:arginine catabolic process to glutamate"/>
    <property type="evidence" value="ECO:0007669"/>
    <property type="project" value="UniProtKB-UniRule"/>
</dbReference>
<dbReference type="GO" id="GO:0019545">
    <property type="term" value="P:arginine catabolic process to succinate"/>
    <property type="evidence" value="ECO:0007669"/>
    <property type="project" value="UniProtKB-UniRule"/>
</dbReference>
<dbReference type="FunFam" id="3.75.10.20:FF:000001">
    <property type="entry name" value="N-succinylarginine dihydrolase"/>
    <property type="match status" value="1"/>
</dbReference>
<dbReference type="Gene3D" id="3.75.10.20">
    <property type="entry name" value="Succinylarginine dihydrolase"/>
    <property type="match status" value="1"/>
</dbReference>
<dbReference type="HAMAP" id="MF_01172">
    <property type="entry name" value="AstB"/>
    <property type="match status" value="1"/>
</dbReference>
<dbReference type="InterPro" id="IPR037031">
    <property type="entry name" value="AstB_sf"/>
</dbReference>
<dbReference type="InterPro" id="IPR007079">
    <property type="entry name" value="SuccinylArg_d-Hdrlase_AstB"/>
</dbReference>
<dbReference type="NCBIfam" id="TIGR03241">
    <property type="entry name" value="arg_catab_astB"/>
    <property type="match status" value="1"/>
</dbReference>
<dbReference type="NCBIfam" id="NF009789">
    <property type="entry name" value="PRK13281.1"/>
    <property type="match status" value="1"/>
</dbReference>
<dbReference type="PANTHER" id="PTHR30420">
    <property type="entry name" value="N-SUCCINYLARGININE DIHYDROLASE"/>
    <property type="match status" value="1"/>
</dbReference>
<dbReference type="PANTHER" id="PTHR30420:SF2">
    <property type="entry name" value="N-SUCCINYLARGININE DIHYDROLASE"/>
    <property type="match status" value="1"/>
</dbReference>
<dbReference type="Pfam" id="PF04996">
    <property type="entry name" value="AstB"/>
    <property type="match status" value="1"/>
</dbReference>
<dbReference type="SUPFAM" id="SSF55909">
    <property type="entry name" value="Pentein"/>
    <property type="match status" value="1"/>
</dbReference>